<protein>
    <recommendedName>
        <fullName>Biosynthetic arginine decarboxylase</fullName>
        <shortName>ADC</shortName>
        <ecNumber>4.1.1.19</ecNumber>
    </recommendedName>
</protein>
<organism>
    <name type="scientific">Citrifermentans bemidjiense (strain ATCC BAA-1014 / DSM 16622 / JCM 12645 / Bem)</name>
    <name type="common">Geobacter bemidjiensis</name>
    <dbReference type="NCBI Taxonomy" id="404380"/>
    <lineage>
        <taxon>Bacteria</taxon>
        <taxon>Pseudomonadati</taxon>
        <taxon>Thermodesulfobacteriota</taxon>
        <taxon>Desulfuromonadia</taxon>
        <taxon>Geobacterales</taxon>
        <taxon>Geobacteraceae</taxon>
        <taxon>Citrifermentans</taxon>
    </lineage>
</organism>
<accession>B5EIW4</accession>
<evidence type="ECO:0000250" key="1"/>
<evidence type="ECO:0000255" key="2"/>
<evidence type="ECO:0000305" key="3"/>
<dbReference type="EC" id="4.1.1.19"/>
<dbReference type="EMBL" id="CP001124">
    <property type="protein sequence ID" value="ACH39919.1"/>
    <property type="molecule type" value="Genomic_DNA"/>
</dbReference>
<dbReference type="RefSeq" id="WP_012531344.1">
    <property type="nucleotide sequence ID" value="NC_011146.1"/>
</dbReference>
<dbReference type="SMR" id="B5EIW4"/>
<dbReference type="STRING" id="404380.Gbem_2916"/>
<dbReference type="KEGG" id="gbm:Gbem_2916"/>
<dbReference type="eggNOG" id="COG1166">
    <property type="taxonomic scope" value="Bacteria"/>
</dbReference>
<dbReference type="HOGENOM" id="CLU_027243_1_0_7"/>
<dbReference type="OrthoDB" id="9802658at2"/>
<dbReference type="UniPathway" id="UPA00186">
    <property type="reaction ID" value="UER00284"/>
</dbReference>
<dbReference type="Proteomes" id="UP000008825">
    <property type="component" value="Chromosome"/>
</dbReference>
<dbReference type="GO" id="GO:0008792">
    <property type="term" value="F:arginine decarboxylase activity"/>
    <property type="evidence" value="ECO:0007669"/>
    <property type="project" value="UniProtKB-UniRule"/>
</dbReference>
<dbReference type="GO" id="GO:0046872">
    <property type="term" value="F:metal ion binding"/>
    <property type="evidence" value="ECO:0007669"/>
    <property type="project" value="UniProtKB-KW"/>
</dbReference>
<dbReference type="GO" id="GO:0006527">
    <property type="term" value="P:arginine catabolic process"/>
    <property type="evidence" value="ECO:0007669"/>
    <property type="project" value="InterPro"/>
</dbReference>
<dbReference type="GO" id="GO:0033388">
    <property type="term" value="P:putrescine biosynthetic process from arginine"/>
    <property type="evidence" value="ECO:0007669"/>
    <property type="project" value="TreeGrafter"/>
</dbReference>
<dbReference type="GO" id="GO:0008295">
    <property type="term" value="P:spermidine biosynthetic process"/>
    <property type="evidence" value="ECO:0007669"/>
    <property type="project" value="UniProtKB-UniRule"/>
</dbReference>
<dbReference type="CDD" id="cd06830">
    <property type="entry name" value="PLPDE_III_ADC"/>
    <property type="match status" value="1"/>
</dbReference>
<dbReference type="FunFam" id="1.20.58.930:FF:000002">
    <property type="entry name" value="Biosynthetic arginine decarboxylase"/>
    <property type="match status" value="1"/>
</dbReference>
<dbReference type="Gene3D" id="1.10.287.3440">
    <property type="match status" value="1"/>
</dbReference>
<dbReference type="Gene3D" id="1.20.58.930">
    <property type="match status" value="1"/>
</dbReference>
<dbReference type="Gene3D" id="3.20.20.10">
    <property type="entry name" value="Alanine racemase"/>
    <property type="match status" value="1"/>
</dbReference>
<dbReference type="Gene3D" id="2.40.37.10">
    <property type="entry name" value="Lyase, Ornithine Decarboxylase, Chain A, domain 1"/>
    <property type="match status" value="1"/>
</dbReference>
<dbReference type="InterPro" id="IPR009006">
    <property type="entry name" value="Ala_racemase/Decarboxylase_C"/>
</dbReference>
<dbReference type="InterPro" id="IPR040634">
    <property type="entry name" value="Arg_decarb_HB"/>
</dbReference>
<dbReference type="InterPro" id="IPR041128">
    <property type="entry name" value="Arg_decarbox_C"/>
</dbReference>
<dbReference type="InterPro" id="IPR002985">
    <property type="entry name" value="Arg_decrbxlase"/>
</dbReference>
<dbReference type="InterPro" id="IPR022657">
    <property type="entry name" value="De-COase2_CS"/>
</dbReference>
<dbReference type="InterPro" id="IPR022644">
    <property type="entry name" value="De-COase2_N"/>
</dbReference>
<dbReference type="InterPro" id="IPR022653">
    <property type="entry name" value="De-COase2_pyr-phos_BS"/>
</dbReference>
<dbReference type="InterPro" id="IPR000183">
    <property type="entry name" value="Orn/DAP/Arg_de-COase"/>
</dbReference>
<dbReference type="InterPro" id="IPR029066">
    <property type="entry name" value="PLP-binding_barrel"/>
</dbReference>
<dbReference type="NCBIfam" id="NF003763">
    <property type="entry name" value="PRK05354.1"/>
    <property type="match status" value="1"/>
</dbReference>
<dbReference type="NCBIfam" id="TIGR01273">
    <property type="entry name" value="speA"/>
    <property type="match status" value="1"/>
</dbReference>
<dbReference type="PANTHER" id="PTHR43295">
    <property type="entry name" value="ARGININE DECARBOXYLASE"/>
    <property type="match status" value="1"/>
</dbReference>
<dbReference type="PANTHER" id="PTHR43295:SF9">
    <property type="entry name" value="BIOSYNTHETIC ARGININE DECARBOXYLASE"/>
    <property type="match status" value="1"/>
</dbReference>
<dbReference type="Pfam" id="PF17810">
    <property type="entry name" value="Arg_decarb_HB"/>
    <property type="match status" value="1"/>
</dbReference>
<dbReference type="Pfam" id="PF17944">
    <property type="entry name" value="Arg_decarbox_C"/>
    <property type="match status" value="1"/>
</dbReference>
<dbReference type="Pfam" id="PF02784">
    <property type="entry name" value="Orn_Arg_deC_N"/>
    <property type="match status" value="1"/>
</dbReference>
<dbReference type="PIRSF" id="PIRSF001336">
    <property type="entry name" value="Arg_decrbxlase"/>
    <property type="match status" value="1"/>
</dbReference>
<dbReference type="PRINTS" id="PR01180">
    <property type="entry name" value="ARGDCRBXLASE"/>
</dbReference>
<dbReference type="PRINTS" id="PR01179">
    <property type="entry name" value="ODADCRBXLASE"/>
</dbReference>
<dbReference type="SUPFAM" id="SSF50621">
    <property type="entry name" value="Alanine racemase C-terminal domain-like"/>
    <property type="match status" value="1"/>
</dbReference>
<dbReference type="SUPFAM" id="SSF51419">
    <property type="entry name" value="PLP-binding barrel"/>
    <property type="match status" value="1"/>
</dbReference>
<dbReference type="PROSITE" id="PS00878">
    <property type="entry name" value="ODR_DC_2_1"/>
    <property type="match status" value="1"/>
</dbReference>
<dbReference type="PROSITE" id="PS00879">
    <property type="entry name" value="ODR_DC_2_2"/>
    <property type="match status" value="1"/>
</dbReference>
<gene>
    <name type="primary">speA</name>
    <name type="ordered locus">Gbem_2916</name>
</gene>
<reference key="1">
    <citation type="submission" date="2008-07" db="EMBL/GenBank/DDBJ databases">
        <title>Complete sequence of Geobacter bemidjiensis BEM.</title>
        <authorList>
            <consortium name="US DOE Joint Genome Institute"/>
            <person name="Lucas S."/>
            <person name="Copeland A."/>
            <person name="Lapidus A."/>
            <person name="Glavina del Rio T."/>
            <person name="Dalin E."/>
            <person name="Tice H."/>
            <person name="Bruce D."/>
            <person name="Goodwin L."/>
            <person name="Pitluck S."/>
            <person name="Kiss H."/>
            <person name="Brettin T."/>
            <person name="Detter J.C."/>
            <person name="Han C."/>
            <person name="Kuske C.R."/>
            <person name="Schmutz J."/>
            <person name="Larimer F."/>
            <person name="Land M."/>
            <person name="Hauser L."/>
            <person name="Kyrpides N."/>
            <person name="Lykidis A."/>
            <person name="Lovley D."/>
            <person name="Richardson P."/>
        </authorList>
    </citation>
    <scope>NUCLEOTIDE SEQUENCE [LARGE SCALE GENOMIC DNA]</scope>
    <source>
        <strain>ATCC BAA-1014 / DSM 16622 / JCM 12645 / Bem</strain>
    </source>
</reference>
<keyword id="KW-0210">Decarboxylase</keyword>
<keyword id="KW-0456">Lyase</keyword>
<keyword id="KW-0460">Magnesium</keyword>
<keyword id="KW-0479">Metal-binding</keyword>
<keyword id="KW-0620">Polyamine biosynthesis</keyword>
<keyword id="KW-0663">Pyridoxal phosphate</keyword>
<keyword id="KW-1185">Reference proteome</keyword>
<keyword id="KW-0745">Spermidine biosynthesis</keyword>
<name>SPEA_CITBB</name>
<feature type="chain" id="PRO_1000145594" description="Biosynthetic arginine decarboxylase">
    <location>
        <begin position="1"/>
        <end position="635"/>
    </location>
</feature>
<feature type="binding site" evidence="2">
    <location>
        <begin position="282"/>
        <end position="292"/>
    </location>
    <ligand>
        <name>substrate</name>
    </ligand>
</feature>
<feature type="modified residue" description="N6-(pyridoxal phosphate)lysine" evidence="1">
    <location>
        <position position="100"/>
    </location>
</feature>
<sequence>MAKWTINDSSKIYNIDNWGAELFSINKKGNVCVHPSPNSKYSIDLKVLVDDLIKRKIKPPILLRFMNILEGRIASISRVFKNAISDNNYPAKYQTFYPIKVNQQRQVVEAIANFGKKYNIGLEVGSKPELVAAISMSTGNNLPILCNGYKDTEFIETVLFATRVGYDITIVVEKLFELEKIVEVSKRTGIVPKLGIRVKLSSKGIGKWSTSGGDDAKFGLRISELIAAIDMLKQNDMLDSVKLLHFHVGSQITKIDKIKNALIEGTRIYAEMRKLGVNLEFLDIGGGLGVDYDGSKSSYFSSVNYSLEEYANDVIYQVKNICDDAGVPCPNIISESGRATVAHYSVLVTDVLNNNTQTLMPDFESILTEPEKLSPTVKKLVDIYKSIDKHSLREDYHDTIQLIQESVSLFNLGYLNMAERANAEWICSKIIRKINSIVEKMKPIPDELQNFQLSLRQTYFANFSLFQSIPDSWAIDQLFPIVPIQRLDEKPDVLTSIADITCDSDGEITSFVGENGRTKALPLHKIKVDEQYYIGFFLIGAYQEILGDMHNLFGDTNAVHITFNKKTNYKIDTVISGDATWESLKYVQYDSQEILKRVRNNLEKDVSLQKVSIEESSHFLELLDKTLQSYTYLGE</sequence>
<comment type="function">
    <text evidence="1">Catalyzes the biosynthesis of agmatine from arginine.</text>
</comment>
<comment type="catalytic activity">
    <reaction>
        <text>L-arginine + H(+) = agmatine + CO2</text>
        <dbReference type="Rhea" id="RHEA:17641"/>
        <dbReference type="ChEBI" id="CHEBI:15378"/>
        <dbReference type="ChEBI" id="CHEBI:16526"/>
        <dbReference type="ChEBI" id="CHEBI:32682"/>
        <dbReference type="ChEBI" id="CHEBI:58145"/>
        <dbReference type="EC" id="4.1.1.19"/>
    </reaction>
</comment>
<comment type="cofactor">
    <cofactor evidence="1">
        <name>Mg(2+)</name>
        <dbReference type="ChEBI" id="CHEBI:18420"/>
    </cofactor>
</comment>
<comment type="cofactor">
    <cofactor evidence="1">
        <name>pyridoxal 5'-phosphate</name>
        <dbReference type="ChEBI" id="CHEBI:597326"/>
    </cofactor>
</comment>
<comment type="pathway">
    <text>Amine and polyamine biosynthesis; agmatine biosynthesis; agmatine from L-arginine: step 1/1.</text>
</comment>
<comment type="similarity">
    <text evidence="3">Belongs to the Orn/Lys/Arg decarboxylase class-II family. SpeA subfamily.</text>
</comment>
<proteinExistence type="inferred from homology"/>